<gene>
    <name evidence="1" type="primary">ilvD</name>
    <name type="ordered locus">CJJ81176_0039</name>
</gene>
<evidence type="ECO:0000255" key="1">
    <source>
        <dbReference type="HAMAP-Rule" id="MF_00012"/>
    </source>
</evidence>
<reference key="1">
    <citation type="submission" date="2006-12" db="EMBL/GenBank/DDBJ databases">
        <authorList>
            <person name="Fouts D.E."/>
            <person name="Nelson K.E."/>
            <person name="Sebastian Y."/>
        </authorList>
    </citation>
    <scope>NUCLEOTIDE SEQUENCE [LARGE SCALE GENOMIC DNA]</scope>
    <source>
        <strain>81-176</strain>
    </source>
</reference>
<dbReference type="EC" id="4.2.1.9" evidence="1"/>
<dbReference type="EMBL" id="CP000538">
    <property type="protein sequence ID" value="EAQ72020.1"/>
    <property type="molecule type" value="Genomic_DNA"/>
</dbReference>
<dbReference type="RefSeq" id="WP_009881385.1">
    <property type="nucleotide sequence ID" value="NC_008787.1"/>
</dbReference>
<dbReference type="SMR" id="A1VX91"/>
<dbReference type="KEGG" id="cjj:CJJ81176_0039"/>
<dbReference type="eggNOG" id="COG0129">
    <property type="taxonomic scope" value="Bacteria"/>
</dbReference>
<dbReference type="HOGENOM" id="CLU_014271_4_2_7"/>
<dbReference type="UniPathway" id="UPA00047">
    <property type="reaction ID" value="UER00057"/>
</dbReference>
<dbReference type="UniPathway" id="UPA00049">
    <property type="reaction ID" value="UER00061"/>
</dbReference>
<dbReference type="Proteomes" id="UP000000646">
    <property type="component" value="Chromosome"/>
</dbReference>
<dbReference type="GO" id="GO:0005829">
    <property type="term" value="C:cytosol"/>
    <property type="evidence" value="ECO:0007669"/>
    <property type="project" value="TreeGrafter"/>
</dbReference>
<dbReference type="GO" id="GO:0051537">
    <property type="term" value="F:2 iron, 2 sulfur cluster binding"/>
    <property type="evidence" value="ECO:0007669"/>
    <property type="project" value="UniProtKB-UniRule"/>
</dbReference>
<dbReference type="GO" id="GO:0004160">
    <property type="term" value="F:dihydroxy-acid dehydratase activity"/>
    <property type="evidence" value="ECO:0007669"/>
    <property type="project" value="UniProtKB-UniRule"/>
</dbReference>
<dbReference type="GO" id="GO:0000287">
    <property type="term" value="F:magnesium ion binding"/>
    <property type="evidence" value="ECO:0007669"/>
    <property type="project" value="UniProtKB-UniRule"/>
</dbReference>
<dbReference type="GO" id="GO:0009097">
    <property type="term" value="P:isoleucine biosynthetic process"/>
    <property type="evidence" value="ECO:0007669"/>
    <property type="project" value="UniProtKB-UniRule"/>
</dbReference>
<dbReference type="GO" id="GO:0009099">
    <property type="term" value="P:L-valine biosynthetic process"/>
    <property type="evidence" value="ECO:0007669"/>
    <property type="project" value="UniProtKB-UniRule"/>
</dbReference>
<dbReference type="FunFam" id="3.50.30.80:FF:000001">
    <property type="entry name" value="Dihydroxy-acid dehydratase"/>
    <property type="match status" value="1"/>
</dbReference>
<dbReference type="Gene3D" id="3.50.30.80">
    <property type="entry name" value="IlvD/EDD C-terminal domain-like"/>
    <property type="match status" value="1"/>
</dbReference>
<dbReference type="HAMAP" id="MF_00012">
    <property type="entry name" value="IlvD"/>
    <property type="match status" value="1"/>
</dbReference>
<dbReference type="InterPro" id="IPR042096">
    <property type="entry name" value="Dihydro-acid_dehy_C"/>
</dbReference>
<dbReference type="InterPro" id="IPR004404">
    <property type="entry name" value="DihydroxyA_deHydtase"/>
</dbReference>
<dbReference type="InterPro" id="IPR020558">
    <property type="entry name" value="DiOHA_6PGluconate_deHydtase_CS"/>
</dbReference>
<dbReference type="InterPro" id="IPR056740">
    <property type="entry name" value="ILV_EDD_C"/>
</dbReference>
<dbReference type="InterPro" id="IPR000581">
    <property type="entry name" value="ILV_EDD_N"/>
</dbReference>
<dbReference type="InterPro" id="IPR037237">
    <property type="entry name" value="IlvD/EDD_N"/>
</dbReference>
<dbReference type="NCBIfam" id="TIGR00110">
    <property type="entry name" value="ilvD"/>
    <property type="match status" value="1"/>
</dbReference>
<dbReference type="NCBIfam" id="NF002068">
    <property type="entry name" value="PRK00911.1"/>
    <property type="match status" value="1"/>
</dbReference>
<dbReference type="PANTHER" id="PTHR43661">
    <property type="entry name" value="D-XYLONATE DEHYDRATASE"/>
    <property type="match status" value="1"/>
</dbReference>
<dbReference type="PANTHER" id="PTHR43661:SF3">
    <property type="entry name" value="D-XYLONATE DEHYDRATASE YAGF-RELATED"/>
    <property type="match status" value="1"/>
</dbReference>
<dbReference type="Pfam" id="PF24877">
    <property type="entry name" value="ILV_EDD_C"/>
    <property type="match status" value="1"/>
</dbReference>
<dbReference type="Pfam" id="PF00920">
    <property type="entry name" value="ILVD_EDD_N"/>
    <property type="match status" value="1"/>
</dbReference>
<dbReference type="SUPFAM" id="SSF143975">
    <property type="entry name" value="IlvD/EDD N-terminal domain-like"/>
    <property type="match status" value="1"/>
</dbReference>
<dbReference type="SUPFAM" id="SSF52016">
    <property type="entry name" value="LeuD/IlvD-like"/>
    <property type="match status" value="1"/>
</dbReference>
<dbReference type="PROSITE" id="PS00886">
    <property type="entry name" value="ILVD_EDD_1"/>
    <property type="match status" value="1"/>
</dbReference>
<dbReference type="PROSITE" id="PS00887">
    <property type="entry name" value="ILVD_EDD_2"/>
    <property type="match status" value="1"/>
</dbReference>
<accession>A1VX91</accession>
<organism>
    <name type="scientific">Campylobacter jejuni subsp. jejuni serotype O:23/36 (strain 81-176)</name>
    <dbReference type="NCBI Taxonomy" id="354242"/>
    <lineage>
        <taxon>Bacteria</taxon>
        <taxon>Pseudomonadati</taxon>
        <taxon>Campylobacterota</taxon>
        <taxon>Epsilonproteobacteria</taxon>
        <taxon>Campylobacterales</taxon>
        <taxon>Campylobacteraceae</taxon>
        <taxon>Campylobacter</taxon>
    </lineage>
</organism>
<name>ILVD_CAMJJ</name>
<sequence>MRSDAIKKGHLKAPNRSLLRACGLKDEDFDKPFIGVANSYIDIIPGHYFLNDYAKIIKDEIRKNGCVPFEFNTIGVDDGIAMGHEGMLYSLPSREIIANSIETVMNAHQLDALICIPNCDKITPGMLMGALRVNVPTIFVSGGPMASGVTKKGEKISLSSVFEAVGAYEAKKISEEEFKDIECSACPSGGSCSGMFTANSMNTLCEAMGIALEGNGTILALSKEREELLRKAARRICEIALDERFKIRNIITQKAVRNAMVVDMAMGGSSNTVLHMLAISREAGVALDIKDLNFISSKVAHIAKIAPSLNSVYMDDIHKAGGVSAVMAEISSRQGHILELDALTITGESLEERLKNAKIKDENIIRKVDNAYSKVGGLAILFGNLAEQGCVIKTAGIIGERKFKGEAVCFNSQDEAIKGIIKGKVKKGNVCVIRYEGPKGGPGMQEMLSPTSLLMGMGLGADVALITDGRFSGATRGLSVGHISPEAAEGGLIGLLKDGDEIEIDVDAYTIHANLSEEEITQRKKEFVLPQKEVPSRWLRMYQKLVSNASKGAVLDME</sequence>
<keyword id="KW-0001">2Fe-2S</keyword>
<keyword id="KW-0028">Amino-acid biosynthesis</keyword>
<keyword id="KW-0100">Branched-chain amino acid biosynthesis</keyword>
<keyword id="KW-0408">Iron</keyword>
<keyword id="KW-0411">Iron-sulfur</keyword>
<keyword id="KW-0456">Lyase</keyword>
<keyword id="KW-0460">Magnesium</keyword>
<keyword id="KW-0479">Metal-binding</keyword>
<proteinExistence type="inferred from homology"/>
<feature type="chain" id="PRO_1000000973" description="Dihydroxy-acid dehydratase">
    <location>
        <begin position="1"/>
        <end position="558"/>
    </location>
</feature>
<feature type="active site" description="Proton acceptor" evidence="1">
    <location>
        <position position="472"/>
    </location>
</feature>
<feature type="binding site" evidence="1">
    <location>
        <position position="78"/>
    </location>
    <ligand>
        <name>Mg(2+)</name>
        <dbReference type="ChEBI" id="CHEBI:18420"/>
    </ligand>
</feature>
<feature type="binding site" evidence="1">
    <location>
        <position position="119"/>
    </location>
    <ligand>
        <name>[2Fe-2S] cluster</name>
        <dbReference type="ChEBI" id="CHEBI:190135"/>
    </ligand>
</feature>
<feature type="binding site" evidence="1">
    <location>
        <position position="120"/>
    </location>
    <ligand>
        <name>Mg(2+)</name>
        <dbReference type="ChEBI" id="CHEBI:18420"/>
    </ligand>
</feature>
<feature type="binding site" description="via carbamate group" evidence="1">
    <location>
        <position position="121"/>
    </location>
    <ligand>
        <name>Mg(2+)</name>
        <dbReference type="ChEBI" id="CHEBI:18420"/>
    </ligand>
</feature>
<feature type="binding site" evidence="1">
    <location>
        <position position="192"/>
    </location>
    <ligand>
        <name>[2Fe-2S] cluster</name>
        <dbReference type="ChEBI" id="CHEBI:190135"/>
    </ligand>
</feature>
<feature type="binding site" evidence="1">
    <location>
        <position position="446"/>
    </location>
    <ligand>
        <name>Mg(2+)</name>
        <dbReference type="ChEBI" id="CHEBI:18420"/>
    </ligand>
</feature>
<feature type="modified residue" description="N6-carboxylysine" evidence="1">
    <location>
        <position position="121"/>
    </location>
</feature>
<comment type="function">
    <text evidence="1">Functions in the biosynthesis of branched-chain amino acids. Catalyzes the dehydration of (2R,3R)-2,3-dihydroxy-3-methylpentanoate (2,3-dihydroxy-3-methylvalerate) into 2-oxo-3-methylpentanoate (2-oxo-3-methylvalerate) and of (2R)-2,3-dihydroxy-3-methylbutanoate (2,3-dihydroxyisovalerate) into 2-oxo-3-methylbutanoate (2-oxoisovalerate), the penultimate precursor to L-isoleucine and L-valine, respectively.</text>
</comment>
<comment type="catalytic activity">
    <reaction evidence="1">
        <text>(2R)-2,3-dihydroxy-3-methylbutanoate = 3-methyl-2-oxobutanoate + H2O</text>
        <dbReference type="Rhea" id="RHEA:24809"/>
        <dbReference type="ChEBI" id="CHEBI:11851"/>
        <dbReference type="ChEBI" id="CHEBI:15377"/>
        <dbReference type="ChEBI" id="CHEBI:49072"/>
        <dbReference type="EC" id="4.2.1.9"/>
    </reaction>
    <physiologicalReaction direction="left-to-right" evidence="1">
        <dbReference type="Rhea" id="RHEA:24810"/>
    </physiologicalReaction>
</comment>
<comment type="catalytic activity">
    <reaction evidence="1">
        <text>(2R,3R)-2,3-dihydroxy-3-methylpentanoate = (S)-3-methyl-2-oxopentanoate + H2O</text>
        <dbReference type="Rhea" id="RHEA:27694"/>
        <dbReference type="ChEBI" id="CHEBI:15377"/>
        <dbReference type="ChEBI" id="CHEBI:35146"/>
        <dbReference type="ChEBI" id="CHEBI:49258"/>
        <dbReference type="EC" id="4.2.1.9"/>
    </reaction>
    <physiologicalReaction direction="left-to-right" evidence="1">
        <dbReference type="Rhea" id="RHEA:27695"/>
    </physiologicalReaction>
</comment>
<comment type="cofactor">
    <cofactor evidence="1">
        <name>[2Fe-2S] cluster</name>
        <dbReference type="ChEBI" id="CHEBI:190135"/>
    </cofactor>
    <text evidence="1">Binds 1 [2Fe-2S] cluster per subunit. This cluster acts as a Lewis acid cofactor.</text>
</comment>
<comment type="cofactor">
    <cofactor evidence="1">
        <name>Mg(2+)</name>
        <dbReference type="ChEBI" id="CHEBI:18420"/>
    </cofactor>
</comment>
<comment type="pathway">
    <text evidence="1">Amino-acid biosynthesis; L-isoleucine biosynthesis; L-isoleucine from 2-oxobutanoate: step 3/4.</text>
</comment>
<comment type="pathway">
    <text evidence="1">Amino-acid biosynthesis; L-valine biosynthesis; L-valine from pyruvate: step 3/4.</text>
</comment>
<comment type="subunit">
    <text evidence="1">Homodimer.</text>
</comment>
<comment type="similarity">
    <text evidence="1">Belongs to the IlvD/Edd family.</text>
</comment>
<protein>
    <recommendedName>
        <fullName evidence="1">Dihydroxy-acid dehydratase</fullName>
        <shortName evidence="1">DAD</shortName>
        <ecNumber evidence="1">4.2.1.9</ecNumber>
    </recommendedName>
</protein>